<organism>
    <name type="scientific">Geobacter metallireducens (strain ATCC 53774 / DSM 7210 / GS-15)</name>
    <dbReference type="NCBI Taxonomy" id="269799"/>
    <lineage>
        <taxon>Bacteria</taxon>
        <taxon>Pseudomonadati</taxon>
        <taxon>Thermodesulfobacteriota</taxon>
        <taxon>Desulfuromonadia</taxon>
        <taxon>Geobacterales</taxon>
        <taxon>Geobacteraceae</taxon>
        <taxon>Geobacter</taxon>
    </lineage>
</organism>
<sequence>MSELTPMMRQYLEIKADHPDSILFFRLGDFYEMFLDDAVKASRILDITLTSRGKGGDGADVPLCGVPYHSAAPYIAKLIEAGEKVAICEQVEDPKTTKGIVKRQVVKVVTPGLVVESESLSPKENNFLLSLFDGNNGRWGVAYLDISTGEFRLTEVEGHDAAWGEVACANPREILVPASFRENMRGEGRGDLAAGRTFTYVDDWVYDRDYTERLIKNHFGVASPGALGCDGYAEGLQAAAAVLHYLQETQKGRVDHIRELRAYRTQEFLVLDEATRRNLELTATLSEGKRRGSLLGLLDRTATAMGGRKLRQWINYPLVIVEKIKERQDAVGELANDPALRAGIREALEGVYDLERLNGRISLASSGAKDLVALKASLQRIPPLLSLLESTGTALLGELCKGIDPMDEVAELIGRGIVDDPPFVLREGGIIADGYHAELDELRAISREGKGFIARLEAKEKARTGITSLKIRYNKVFGYYIEVTKTNLGSIPEDYIRRQTLANAERFITPELKEYEEKVLGAEERIVELEYSLFQQIRQSVAAEGERLARTADRLATLDVLASLADVAHERNYCRPGIDDGDTLSISEGRHPVVEALNVSERFVPNDVLLDNGENQLVIITGPNMAGKSTFMRQVALIVLMAQLGSFVPATEARIGVVDRIFTRVGASDNLARGQSTFMVEMMETAAILRNATPKSLVVLDEIGRGTSTFDGVSIAWAVAEYLHDTARCAAKTLFATHYHELTELAVTRGKIKNCNVAVKEWNDQVIFLRKIVEGGASHSYGIQVARLAGLPIEVIERAKEILHNLEKGEYVEGGVPRISRGKRAAAPKSSPQLSLFEQGDDLLRQRLTGLNIAALTPLEALNILDELKRMV</sequence>
<comment type="function">
    <text evidence="1">This protein is involved in the repair of mismatches in DNA. It is possible that it carries out the mismatch recognition step. This protein has a weak ATPase activity.</text>
</comment>
<comment type="similarity">
    <text evidence="1">Belongs to the DNA mismatch repair MutS family.</text>
</comment>
<gene>
    <name evidence="1" type="primary">mutS</name>
    <name type="ordered locus">Gmet_1424</name>
</gene>
<proteinExistence type="inferred from homology"/>
<name>MUTS_GEOMG</name>
<keyword id="KW-0067">ATP-binding</keyword>
<keyword id="KW-0227">DNA damage</keyword>
<keyword id="KW-0234">DNA repair</keyword>
<keyword id="KW-0238">DNA-binding</keyword>
<keyword id="KW-0547">Nucleotide-binding</keyword>
<keyword id="KW-1185">Reference proteome</keyword>
<reference key="1">
    <citation type="journal article" date="2009" name="BMC Microbiol.">
        <title>The genome sequence of Geobacter metallireducens: features of metabolism, physiology and regulation common and dissimilar to Geobacter sulfurreducens.</title>
        <authorList>
            <person name="Aklujkar M."/>
            <person name="Krushkal J."/>
            <person name="DiBartolo G."/>
            <person name="Lapidus A."/>
            <person name="Land M.L."/>
            <person name="Lovley D.R."/>
        </authorList>
    </citation>
    <scope>NUCLEOTIDE SEQUENCE [LARGE SCALE GENOMIC DNA]</scope>
    <source>
        <strain>ATCC 53774 / DSM 7210 / GS-15</strain>
    </source>
</reference>
<accession>Q39VR6</accession>
<dbReference type="EMBL" id="CP000148">
    <property type="protein sequence ID" value="ABB31658.1"/>
    <property type="molecule type" value="Genomic_DNA"/>
</dbReference>
<dbReference type="RefSeq" id="WP_004511644.1">
    <property type="nucleotide sequence ID" value="NC_007517.1"/>
</dbReference>
<dbReference type="SMR" id="Q39VR6"/>
<dbReference type="STRING" id="269799.Gmet_1424"/>
<dbReference type="KEGG" id="gme:Gmet_1424"/>
<dbReference type="eggNOG" id="COG0249">
    <property type="taxonomic scope" value="Bacteria"/>
</dbReference>
<dbReference type="HOGENOM" id="CLU_002472_3_1_7"/>
<dbReference type="Proteomes" id="UP000007073">
    <property type="component" value="Chromosome"/>
</dbReference>
<dbReference type="GO" id="GO:0005829">
    <property type="term" value="C:cytosol"/>
    <property type="evidence" value="ECO:0007669"/>
    <property type="project" value="TreeGrafter"/>
</dbReference>
<dbReference type="GO" id="GO:0005524">
    <property type="term" value="F:ATP binding"/>
    <property type="evidence" value="ECO:0007669"/>
    <property type="project" value="UniProtKB-UniRule"/>
</dbReference>
<dbReference type="GO" id="GO:0140664">
    <property type="term" value="F:ATP-dependent DNA damage sensor activity"/>
    <property type="evidence" value="ECO:0007669"/>
    <property type="project" value="InterPro"/>
</dbReference>
<dbReference type="GO" id="GO:0003684">
    <property type="term" value="F:damaged DNA binding"/>
    <property type="evidence" value="ECO:0007669"/>
    <property type="project" value="UniProtKB-UniRule"/>
</dbReference>
<dbReference type="GO" id="GO:0030983">
    <property type="term" value="F:mismatched DNA binding"/>
    <property type="evidence" value="ECO:0007669"/>
    <property type="project" value="InterPro"/>
</dbReference>
<dbReference type="GO" id="GO:0006298">
    <property type="term" value="P:mismatch repair"/>
    <property type="evidence" value="ECO:0007669"/>
    <property type="project" value="UniProtKB-UniRule"/>
</dbReference>
<dbReference type="CDD" id="cd03284">
    <property type="entry name" value="ABC_MutS1"/>
    <property type="match status" value="1"/>
</dbReference>
<dbReference type="FunFam" id="1.10.1420.10:FF:000007">
    <property type="entry name" value="DNA mismatch repair protein MutS"/>
    <property type="match status" value="1"/>
</dbReference>
<dbReference type="FunFam" id="3.40.1170.10:FF:000001">
    <property type="entry name" value="DNA mismatch repair protein MutS"/>
    <property type="match status" value="1"/>
</dbReference>
<dbReference type="Gene3D" id="1.10.1420.10">
    <property type="match status" value="2"/>
</dbReference>
<dbReference type="Gene3D" id="3.40.1170.10">
    <property type="entry name" value="DNA repair protein MutS, domain I"/>
    <property type="match status" value="1"/>
</dbReference>
<dbReference type="Gene3D" id="3.30.420.110">
    <property type="entry name" value="MutS, connector domain"/>
    <property type="match status" value="1"/>
</dbReference>
<dbReference type="Gene3D" id="3.40.50.300">
    <property type="entry name" value="P-loop containing nucleotide triphosphate hydrolases"/>
    <property type="match status" value="1"/>
</dbReference>
<dbReference type="HAMAP" id="MF_00096">
    <property type="entry name" value="MutS"/>
    <property type="match status" value="1"/>
</dbReference>
<dbReference type="InterPro" id="IPR005748">
    <property type="entry name" value="DNA_mismatch_repair_MutS"/>
</dbReference>
<dbReference type="InterPro" id="IPR007695">
    <property type="entry name" value="DNA_mismatch_repair_MutS-lik_N"/>
</dbReference>
<dbReference type="InterPro" id="IPR017261">
    <property type="entry name" value="DNA_mismatch_repair_MutS/MSH"/>
</dbReference>
<dbReference type="InterPro" id="IPR000432">
    <property type="entry name" value="DNA_mismatch_repair_MutS_C"/>
</dbReference>
<dbReference type="InterPro" id="IPR007861">
    <property type="entry name" value="DNA_mismatch_repair_MutS_clamp"/>
</dbReference>
<dbReference type="InterPro" id="IPR007696">
    <property type="entry name" value="DNA_mismatch_repair_MutS_core"/>
</dbReference>
<dbReference type="InterPro" id="IPR016151">
    <property type="entry name" value="DNA_mismatch_repair_MutS_N"/>
</dbReference>
<dbReference type="InterPro" id="IPR036187">
    <property type="entry name" value="DNA_mismatch_repair_MutS_sf"/>
</dbReference>
<dbReference type="InterPro" id="IPR007860">
    <property type="entry name" value="DNA_mmatch_repair_MutS_con_dom"/>
</dbReference>
<dbReference type="InterPro" id="IPR045076">
    <property type="entry name" value="MutS"/>
</dbReference>
<dbReference type="InterPro" id="IPR036678">
    <property type="entry name" value="MutS_con_dom_sf"/>
</dbReference>
<dbReference type="InterPro" id="IPR027417">
    <property type="entry name" value="P-loop_NTPase"/>
</dbReference>
<dbReference type="NCBIfam" id="TIGR01070">
    <property type="entry name" value="mutS1"/>
    <property type="match status" value="1"/>
</dbReference>
<dbReference type="NCBIfam" id="NF003810">
    <property type="entry name" value="PRK05399.1"/>
    <property type="match status" value="1"/>
</dbReference>
<dbReference type="PANTHER" id="PTHR11361:SF34">
    <property type="entry name" value="DNA MISMATCH REPAIR PROTEIN MSH1, MITOCHONDRIAL"/>
    <property type="match status" value="1"/>
</dbReference>
<dbReference type="PANTHER" id="PTHR11361">
    <property type="entry name" value="DNA MISMATCH REPAIR PROTEIN MUTS FAMILY MEMBER"/>
    <property type="match status" value="1"/>
</dbReference>
<dbReference type="Pfam" id="PF01624">
    <property type="entry name" value="MutS_I"/>
    <property type="match status" value="1"/>
</dbReference>
<dbReference type="Pfam" id="PF05188">
    <property type="entry name" value="MutS_II"/>
    <property type="match status" value="1"/>
</dbReference>
<dbReference type="Pfam" id="PF05192">
    <property type="entry name" value="MutS_III"/>
    <property type="match status" value="1"/>
</dbReference>
<dbReference type="Pfam" id="PF05190">
    <property type="entry name" value="MutS_IV"/>
    <property type="match status" value="1"/>
</dbReference>
<dbReference type="Pfam" id="PF00488">
    <property type="entry name" value="MutS_V"/>
    <property type="match status" value="1"/>
</dbReference>
<dbReference type="PIRSF" id="PIRSF037677">
    <property type="entry name" value="DNA_mis_repair_Msh6"/>
    <property type="match status" value="1"/>
</dbReference>
<dbReference type="SMART" id="SM00534">
    <property type="entry name" value="MUTSac"/>
    <property type="match status" value="1"/>
</dbReference>
<dbReference type="SMART" id="SM00533">
    <property type="entry name" value="MUTSd"/>
    <property type="match status" value="1"/>
</dbReference>
<dbReference type="SUPFAM" id="SSF55271">
    <property type="entry name" value="DNA repair protein MutS, domain I"/>
    <property type="match status" value="1"/>
</dbReference>
<dbReference type="SUPFAM" id="SSF53150">
    <property type="entry name" value="DNA repair protein MutS, domain II"/>
    <property type="match status" value="1"/>
</dbReference>
<dbReference type="SUPFAM" id="SSF48334">
    <property type="entry name" value="DNA repair protein MutS, domain III"/>
    <property type="match status" value="1"/>
</dbReference>
<dbReference type="SUPFAM" id="SSF52540">
    <property type="entry name" value="P-loop containing nucleoside triphosphate hydrolases"/>
    <property type="match status" value="1"/>
</dbReference>
<dbReference type="PROSITE" id="PS00486">
    <property type="entry name" value="DNA_MISMATCH_REPAIR_2"/>
    <property type="match status" value="1"/>
</dbReference>
<evidence type="ECO:0000255" key="1">
    <source>
        <dbReference type="HAMAP-Rule" id="MF_00096"/>
    </source>
</evidence>
<protein>
    <recommendedName>
        <fullName evidence="1">DNA mismatch repair protein MutS</fullName>
    </recommendedName>
</protein>
<feature type="chain" id="PRO_1000008063" description="DNA mismatch repair protein MutS">
    <location>
        <begin position="1"/>
        <end position="872"/>
    </location>
</feature>
<feature type="binding site" evidence="1">
    <location>
        <begin position="622"/>
        <end position="629"/>
    </location>
    <ligand>
        <name>ATP</name>
        <dbReference type="ChEBI" id="CHEBI:30616"/>
    </ligand>
</feature>